<gene>
    <name evidence="1" type="primary">prs1</name>
    <name type="synonym">prsA</name>
    <name type="ordered locus">SP_0027</name>
</gene>
<sequence>MSFSDLKLFALSSNKELAERVAQEIGIELGKSSVRQFSDGEIQVNIEESIRGKHVFILQSTSSPVNDNLLEILIMVDALKRASAESVNVVMPYYGYARQDRKARAREPITSKLVANMLEVAGVDRLLTIDLHAAQIQGFFDIPVDHLMGAPLIADYFERRGMVGSDYVVVSPDHGGVTRARKLAEFLKTSIAIIDKRRSVDKMNTSEVMNIIGKVEGKTCILIDDMIDTAGTICHAADALAEAGAVEVYASCTHPVLSGPATDNIQKSAIKKLVVLDTIYLPEERLIDKIEQISIAHLLGDAIVRIHEKRPLSPLFDIEKKI</sequence>
<protein>
    <recommendedName>
        <fullName evidence="1">Ribose-phosphate pyrophosphokinase 1</fullName>
        <shortName evidence="1">RPPK 1</shortName>
        <ecNumber evidence="1">2.7.6.1</ecNumber>
    </recommendedName>
    <alternativeName>
        <fullName evidence="1">5-phospho-D-ribosyl alpha-1-diphosphate synthase 1</fullName>
    </alternativeName>
    <alternativeName>
        <fullName evidence="1">Phosphoribosyl diphosphate synthase 1</fullName>
    </alternativeName>
    <alternativeName>
        <fullName evidence="1">Phosphoribosyl pyrophosphate synthase 1</fullName>
        <shortName evidence="1">P-Rib-PP synthase 1</shortName>
        <shortName evidence="1">PRPP synthase 1</shortName>
        <shortName evidence="1">PRPPase 1</shortName>
    </alternativeName>
</protein>
<evidence type="ECO:0000255" key="1">
    <source>
        <dbReference type="HAMAP-Rule" id="MF_00583"/>
    </source>
</evidence>
<keyword id="KW-0067">ATP-binding</keyword>
<keyword id="KW-0963">Cytoplasm</keyword>
<keyword id="KW-0418">Kinase</keyword>
<keyword id="KW-0460">Magnesium</keyword>
<keyword id="KW-0479">Metal-binding</keyword>
<keyword id="KW-0545">Nucleotide biosynthesis</keyword>
<keyword id="KW-0547">Nucleotide-binding</keyword>
<keyword id="KW-1185">Reference proteome</keyword>
<keyword id="KW-0808">Transferase</keyword>
<comment type="function">
    <text evidence="1">Involved in the biosynthesis of the central metabolite phospho-alpha-D-ribosyl-1-pyrophosphate (PRPP) via the transfer of pyrophosphoryl group from ATP to 1-hydroxyl of ribose-5-phosphate (Rib-5-P).</text>
</comment>
<comment type="catalytic activity">
    <reaction evidence="1">
        <text>D-ribose 5-phosphate + ATP = 5-phospho-alpha-D-ribose 1-diphosphate + AMP + H(+)</text>
        <dbReference type="Rhea" id="RHEA:15609"/>
        <dbReference type="ChEBI" id="CHEBI:15378"/>
        <dbReference type="ChEBI" id="CHEBI:30616"/>
        <dbReference type="ChEBI" id="CHEBI:58017"/>
        <dbReference type="ChEBI" id="CHEBI:78346"/>
        <dbReference type="ChEBI" id="CHEBI:456215"/>
        <dbReference type="EC" id="2.7.6.1"/>
    </reaction>
</comment>
<comment type="cofactor">
    <cofactor evidence="1">
        <name>Mg(2+)</name>
        <dbReference type="ChEBI" id="CHEBI:18420"/>
    </cofactor>
    <text evidence="1">Binds 2 Mg(2+) ions per subunit.</text>
</comment>
<comment type="pathway">
    <text evidence="1">Metabolic intermediate biosynthesis; 5-phospho-alpha-D-ribose 1-diphosphate biosynthesis; 5-phospho-alpha-D-ribose 1-diphosphate from D-ribose 5-phosphate (route I): step 1/1.</text>
</comment>
<comment type="subunit">
    <text evidence="1">Homohexamer.</text>
</comment>
<comment type="subcellular location">
    <subcellularLocation>
        <location evidence="1">Cytoplasm</location>
    </subcellularLocation>
</comment>
<comment type="similarity">
    <text evidence="1">Belongs to the ribose-phosphate pyrophosphokinase family. Class I subfamily.</text>
</comment>
<reference key="1">
    <citation type="journal article" date="2001" name="Science">
        <title>Complete genome sequence of a virulent isolate of Streptococcus pneumoniae.</title>
        <authorList>
            <person name="Tettelin H."/>
            <person name="Nelson K.E."/>
            <person name="Paulsen I.T."/>
            <person name="Eisen J.A."/>
            <person name="Read T.D."/>
            <person name="Peterson S.N."/>
            <person name="Heidelberg J.F."/>
            <person name="DeBoy R.T."/>
            <person name="Haft D.H."/>
            <person name="Dodson R.J."/>
            <person name="Durkin A.S."/>
            <person name="Gwinn M.L."/>
            <person name="Kolonay J.F."/>
            <person name="Nelson W.C."/>
            <person name="Peterson J.D."/>
            <person name="Umayam L.A."/>
            <person name="White O."/>
            <person name="Salzberg S.L."/>
            <person name="Lewis M.R."/>
            <person name="Radune D."/>
            <person name="Holtzapple E.K."/>
            <person name="Khouri H.M."/>
            <person name="Wolf A.M."/>
            <person name="Utterback T.R."/>
            <person name="Hansen C.L."/>
            <person name="McDonald L.A."/>
            <person name="Feldblyum T.V."/>
            <person name="Angiuoli S.V."/>
            <person name="Dickinson T."/>
            <person name="Hickey E.K."/>
            <person name="Holt I.E."/>
            <person name="Loftus B.J."/>
            <person name="Yang F."/>
            <person name="Smith H.O."/>
            <person name="Venter J.C."/>
            <person name="Dougherty B.A."/>
            <person name="Morrison D.A."/>
            <person name="Hollingshead S.K."/>
            <person name="Fraser C.M."/>
        </authorList>
    </citation>
    <scope>NUCLEOTIDE SEQUENCE [LARGE SCALE GENOMIC DNA]</scope>
    <source>
        <strain>ATCC BAA-334 / TIGR4</strain>
    </source>
</reference>
<dbReference type="EC" id="2.7.6.1" evidence="1"/>
<dbReference type="EMBL" id="AE005672">
    <property type="protein sequence ID" value="AAK74218.1"/>
    <property type="molecule type" value="Genomic_DNA"/>
</dbReference>
<dbReference type="PIR" id="A95003">
    <property type="entry name" value="A95003"/>
</dbReference>
<dbReference type="RefSeq" id="WP_000010163.1">
    <property type="nucleotide sequence ID" value="NZ_CP155539.1"/>
</dbReference>
<dbReference type="SMR" id="P65239"/>
<dbReference type="PaxDb" id="170187-SP_0027"/>
<dbReference type="EnsemblBacteria" id="AAK74218">
    <property type="protein sequence ID" value="AAK74218"/>
    <property type="gene ID" value="SP_0027"/>
</dbReference>
<dbReference type="KEGG" id="spn:SP_0027"/>
<dbReference type="eggNOG" id="COG0462">
    <property type="taxonomic scope" value="Bacteria"/>
</dbReference>
<dbReference type="PhylomeDB" id="P65239"/>
<dbReference type="BioCyc" id="SPNE170187:G1FZB-32-MONOMER"/>
<dbReference type="UniPathway" id="UPA00087">
    <property type="reaction ID" value="UER00172"/>
</dbReference>
<dbReference type="Proteomes" id="UP000000585">
    <property type="component" value="Chromosome"/>
</dbReference>
<dbReference type="GO" id="GO:0005737">
    <property type="term" value="C:cytoplasm"/>
    <property type="evidence" value="ECO:0007669"/>
    <property type="project" value="UniProtKB-SubCell"/>
</dbReference>
<dbReference type="GO" id="GO:0002189">
    <property type="term" value="C:ribose phosphate diphosphokinase complex"/>
    <property type="evidence" value="ECO:0007669"/>
    <property type="project" value="TreeGrafter"/>
</dbReference>
<dbReference type="GO" id="GO:0005524">
    <property type="term" value="F:ATP binding"/>
    <property type="evidence" value="ECO:0007669"/>
    <property type="project" value="UniProtKB-KW"/>
</dbReference>
<dbReference type="GO" id="GO:0016301">
    <property type="term" value="F:kinase activity"/>
    <property type="evidence" value="ECO:0007669"/>
    <property type="project" value="UniProtKB-KW"/>
</dbReference>
<dbReference type="GO" id="GO:0000287">
    <property type="term" value="F:magnesium ion binding"/>
    <property type="evidence" value="ECO:0007669"/>
    <property type="project" value="UniProtKB-UniRule"/>
</dbReference>
<dbReference type="GO" id="GO:0004749">
    <property type="term" value="F:ribose phosphate diphosphokinase activity"/>
    <property type="evidence" value="ECO:0007669"/>
    <property type="project" value="UniProtKB-UniRule"/>
</dbReference>
<dbReference type="GO" id="GO:0006015">
    <property type="term" value="P:5-phosphoribose 1-diphosphate biosynthetic process"/>
    <property type="evidence" value="ECO:0007669"/>
    <property type="project" value="UniProtKB-UniRule"/>
</dbReference>
<dbReference type="GO" id="GO:0006164">
    <property type="term" value="P:purine nucleotide biosynthetic process"/>
    <property type="evidence" value="ECO:0007669"/>
    <property type="project" value="TreeGrafter"/>
</dbReference>
<dbReference type="GO" id="GO:0009156">
    <property type="term" value="P:ribonucleoside monophosphate biosynthetic process"/>
    <property type="evidence" value="ECO:0007669"/>
    <property type="project" value="InterPro"/>
</dbReference>
<dbReference type="CDD" id="cd06223">
    <property type="entry name" value="PRTases_typeI"/>
    <property type="match status" value="1"/>
</dbReference>
<dbReference type="FunFam" id="3.40.50.2020:FF:000001">
    <property type="entry name" value="Ribose-phosphate pyrophosphokinase"/>
    <property type="match status" value="1"/>
</dbReference>
<dbReference type="Gene3D" id="3.40.50.2020">
    <property type="match status" value="2"/>
</dbReference>
<dbReference type="HAMAP" id="MF_00583_B">
    <property type="entry name" value="RibP_PPkinase_B"/>
    <property type="match status" value="1"/>
</dbReference>
<dbReference type="InterPro" id="IPR000842">
    <property type="entry name" value="PRib_PP_synth_CS"/>
</dbReference>
<dbReference type="InterPro" id="IPR029099">
    <property type="entry name" value="Pribosyltran_N"/>
</dbReference>
<dbReference type="InterPro" id="IPR000836">
    <property type="entry name" value="PRibTrfase_dom"/>
</dbReference>
<dbReference type="InterPro" id="IPR029057">
    <property type="entry name" value="PRTase-like"/>
</dbReference>
<dbReference type="InterPro" id="IPR005946">
    <property type="entry name" value="Rib-P_diPkinase"/>
</dbReference>
<dbReference type="InterPro" id="IPR037515">
    <property type="entry name" value="Rib-P_diPkinase_bac"/>
</dbReference>
<dbReference type="NCBIfam" id="NF002320">
    <property type="entry name" value="PRK01259.1"/>
    <property type="match status" value="1"/>
</dbReference>
<dbReference type="NCBIfam" id="NF002618">
    <property type="entry name" value="PRK02269.1"/>
    <property type="match status" value="1"/>
</dbReference>
<dbReference type="NCBIfam" id="TIGR01251">
    <property type="entry name" value="ribP_PPkin"/>
    <property type="match status" value="1"/>
</dbReference>
<dbReference type="PANTHER" id="PTHR10210">
    <property type="entry name" value="RIBOSE-PHOSPHATE DIPHOSPHOKINASE FAMILY MEMBER"/>
    <property type="match status" value="1"/>
</dbReference>
<dbReference type="PANTHER" id="PTHR10210:SF41">
    <property type="entry name" value="RIBOSE-PHOSPHATE PYROPHOSPHOKINASE 1, CHLOROPLASTIC"/>
    <property type="match status" value="1"/>
</dbReference>
<dbReference type="Pfam" id="PF14572">
    <property type="entry name" value="Pribosyl_synth"/>
    <property type="match status" value="1"/>
</dbReference>
<dbReference type="Pfam" id="PF13793">
    <property type="entry name" value="Pribosyltran_N"/>
    <property type="match status" value="1"/>
</dbReference>
<dbReference type="SMART" id="SM01400">
    <property type="entry name" value="Pribosyltran_N"/>
    <property type="match status" value="1"/>
</dbReference>
<dbReference type="SUPFAM" id="SSF53271">
    <property type="entry name" value="PRTase-like"/>
    <property type="match status" value="1"/>
</dbReference>
<dbReference type="PROSITE" id="PS00114">
    <property type="entry name" value="PRPP_SYNTHASE"/>
    <property type="match status" value="1"/>
</dbReference>
<organism>
    <name type="scientific">Streptococcus pneumoniae serotype 4 (strain ATCC BAA-334 / TIGR4)</name>
    <dbReference type="NCBI Taxonomy" id="170187"/>
    <lineage>
        <taxon>Bacteria</taxon>
        <taxon>Bacillati</taxon>
        <taxon>Bacillota</taxon>
        <taxon>Bacilli</taxon>
        <taxon>Lactobacillales</taxon>
        <taxon>Streptococcaceae</taxon>
        <taxon>Streptococcus</taxon>
    </lineage>
</organism>
<proteinExistence type="inferred from homology"/>
<name>KPRS1_STRPN</name>
<feature type="chain" id="PRO_0000141204" description="Ribose-phosphate pyrophosphokinase 1">
    <location>
        <begin position="1"/>
        <end position="322"/>
    </location>
</feature>
<feature type="active site" evidence="1">
    <location>
        <position position="196"/>
    </location>
</feature>
<feature type="binding site" evidence="1">
    <location>
        <begin position="39"/>
        <end position="41"/>
    </location>
    <ligand>
        <name>ATP</name>
        <dbReference type="ChEBI" id="CHEBI:30616"/>
    </ligand>
</feature>
<feature type="binding site" evidence="1">
    <location>
        <begin position="98"/>
        <end position="99"/>
    </location>
    <ligand>
        <name>ATP</name>
        <dbReference type="ChEBI" id="CHEBI:30616"/>
    </ligand>
</feature>
<feature type="binding site" evidence="1">
    <location>
        <position position="132"/>
    </location>
    <ligand>
        <name>Mg(2+)</name>
        <dbReference type="ChEBI" id="CHEBI:18420"/>
        <label>1</label>
    </ligand>
</feature>
<feature type="binding site" evidence="1">
    <location>
        <position position="173"/>
    </location>
    <ligand>
        <name>Mg(2+)</name>
        <dbReference type="ChEBI" id="CHEBI:18420"/>
        <label>2</label>
    </ligand>
</feature>
<feature type="binding site" evidence="1">
    <location>
        <position position="198"/>
    </location>
    <ligand>
        <name>D-ribose 5-phosphate</name>
        <dbReference type="ChEBI" id="CHEBI:78346"/>
    </ligand>
</feature>
<feature type="binding site" evidence="1">
    <location>
        <position position="224"/>
    </location>
    <ligand>
        <name>D-ribose 5-phosphate</name>
        <dbReference type="ChEBI" id="CHEBI:78346"/>
    </ligand>
</feature>
<feature type="binding site" evidence="1">
    <location>
        <begin position="228"/>
        <end position="232"/>
    </location>
    <ligand>
        <name>D-ribose 5-phosphate</name>
        <dbReference type="ChEBI" id="CHEBI:78346"/>
    </ligand>
</feature>
<accession>P65239</accession>
<accession>Q97TB4</accession>